<evidence type="ECO:0000250" key="1"/>
<evidence type="ECO:0000255" key="2"/>
<evidence type="ECO:0000305" key="3"/>
<feature type="chain" id="PRO_0000082383" description="ATP synthase subunit b, sodium ion specific">
    <location>
        <begin position="1"/>
        <end position="168"/>
    </location>
</feature>
<feature type="transmembrane region" description="Helical" evidence="2">
    <location>
        <begin position="9"/>
        <end position="29"/>
    </location>
</feature>
<organism>
    <name type="scientific">Propionigenium modestum</name>
    <dbReference type="NCBI Taxonomy" id="2333"/>
    <lineage>
        <taxon>Bacteria</taxon>
        <taxon>Fusobacteriati</taxon>
        <taxon>Fusobacteriota</taxon>
        <taxon>Fusobacteriia</taxon>
        <taxon>Fusobacteriales</taxon>
        <taxon>Fusobacteriaceae</taxon>
        <taxon>Propionigenium</taxon>
    </lineage>
</organism>
<sequence length="168" mass="19201">MAPQNMPAVSIDINMFWQIINFLILMFFFKKYFQKPIAKVLDARKEKIANDLKQAEIDKEMAAKANGEAQGIVKSAKTEANEMLLRAEKKADERKETILKEANTQREKMLKSAEVEIEKMKEQARKELQLEVTDLAVKLAEKMINEKVDAKIGANLLDQFIGEVGEEK</sequence>
<accession>P21904</accession>
<reference key="1">
    <citation type="journal article" date="1990" name="Nucleic Acids Res.">
        <title>Sequence of subunits a and b of the sodium ion translocating adenosine triphosphate synthase of Propionigenium modestum.</title>
        <authorList>
            <person name="Kaim G.W."/>
            <person name="Ludwig W."/>
            <person name="Dimroth P."/>
            <person name="Schleifer K.H."/>
        </authorList>
    </citation>
    <scope>NUCLEOTIDE SEQUENCE [GENOMIC DNA]</scope>
    <source>
        <strain>DSM 2376 / Gra Succ2</strain>
    </source>
</reference>
<reference key="2">
    <citation type="journal article" date="1992" name="Eur. J. Biochem.">
        <title>Cloning, sequencing and in vivo expression of genes encoding the F0 part of the sodium-ion-dependent ATP synthase of Propionigenium modestum in Escherichia coli.</title>
        <authorList>
            <person name="Kaim G.W."/>
            <person name="Ludwig W."/>
            <person name="Dimroth P."/>
            <person name="Schleifer K.H."/>
        </authorList>
    </citation>
    <scope>NUCLEOTIDE SEQUENCE [GENOMIC DNA]</scope>
    <source>
        <strain>DSM 2376 / Gra Succ2</strain>
    </source>
</reference>
<reference key="3">
    <citation type="journal article" date="1990" name="Nucleic Acids Res.">
        <title>Nucleotide sequence of the F0 subunits of the sodium dependent F1F0 ATPase of Propionigenium modestum.</title>
        <authorList>
            <person name="Esser U."/>
            <person name="Krumholz L.R."/>
            <person name="Simoni R.D."/>
        </authorList>
    </citation>
    <scope>NUCLEOTIDE SEQUENCE [GENOMIC DNA]</scope>
    <source>
        <strain>DSM 2376 / Gra Succ2</strain>
    </source>
</reference>
<reference key="4">
    <citation type="journal article" date="1993" name="FEBS Lett.">
        <title>N-terminal amino acid sequences of the subunits of the Na(+)-translocating F1F0 ATPase from Propionigenium modestum.</title>
        <authorList>
            <person name="Gerike U."/>
            <person name="Dimroth P."/>
        </authorList>
    </citation>
    <scope>PROTEIN SEQUENCE OF 1-7</scope>
</reference>
<proteinExistence type="evidence at protein level"/>
<keyword id="KW-0066">ATP synthesis</keyword>
<keyword id="KW-0997">Cell inner membrane</keyword>
<keyword id="KW-1003">Cell membrane</keyword>
<keyword id="KW-0138">CF(0)</keyword>
<keyword id="KW-0903">Direct protein sequencing</keyword>
<keyword id="KW-0375">Hydrogen ion transport</keyword>
<keyword id="KW-0406">Ion transport</keyword>
<keyword id="KW-0472">Membrane</keyword>
<keyword id="KW-0915">Sodium</keyword>
<keyword id="KW-0739">Sodium transport</keyword>
<keyword id="KW-0812">Transmembrane</keyword>
<keyword id="KW-1133">Transmembrane helix</keyword>
<keyword id="KW-0813">Transport</keyword>
<dbReference type="EMBL" id="X54810">
    <property type="protein sequence ID" value="CAA38580.1"/>
    <property type="status" value="ALT_INIT"/>
    <property type="molecule type" value="Genomic_DNA"/>
</dbReference>
<dbReference type="EMBL" id="X66102">
    <property type="protein sequence ID" value="CAA46896.1"/>
    <property type="status" value="ALT_INIT"/>
    <property type="molecule type" value="Genomic_DNA"/>
</dbReference>
<dbReference type="EMBL" id="X53960">
    <property type="protein sequence ID" value="CAA37913.1"/>
    <property type="molecule type" value="Genomic_DNA"/>
</dbReference>
<dbReference type="EMBL" id="X58461">
    <property type="protein sequence ID" value="CAA41370.1"/>
    <property type="status" value="ALT_INIT"/>
    <property type="molecule type" value="Genomic_DNA"/>
</dbReference>
<dbReference type="PIR" id="S23323">
    <property type="entry name" value="S23323"/>
</dbReference>
<dbReference type="SMR" id="P21904"/>
<dbReference type="TCDB" id="3.A.2.1.2">
    <property type="family name" value="the h+- or na+-translocating f-type, v-type and a-type atpase (f-atpase) superfamily"/>
</dbReference>
<dbReference type="GO" id="GO:0005886">
    <property type="term" value="C:plasma membrane"/>
    <property type="evidence" value="ECO:0007669"/>
    <property type="project" value="UniProtKB-SubCell"/>
</dbReference>
<dbReference type="GO" id="GO:0045259">
    <property type="term" value="C:proton-transporting ATP synthase complex"/>
    <property type="evidence" value="ECO:0007669"/>
    <property type="project" value="UniProtKB-KW"/>
</dbReference>
<dbReference type="GO" id="GO:0046933">
    <property type="term" value="F:proton-transporting ATP synthase activity, rotational mechanism"/>
    <property type="evidence" value="ECO:0007669"/>
    <property type="project" value="UniProtKB-UniRule"/>
</dbReference>
<dbReference type="GO" id="GO:0046961">
    <property type="term" value="F:proton-transporting ATPase activity, rotational mechanism"/>
    <property type="evidence" value="ECO:0007669"/>
    <property type="project" value="TreeGrafter"/>
</dbReference>
<dbReference type="GO" id="GO:0006814">
    <property type="term" value="P:sodium ion transport"/>
    <property type="evidence" value="ECO:0007669"/>
    <property type="project" value="UniProtKB-KW"/>
</dbReference>
<dbReference type="CDD" id="cd06503">
    <property type="entry name" value="ATP-synt_Fo_b"/>
    <property type="match status" value="1"/>
</dbReference>
<dbReference type="Gene3D" id="1.20.5.620">
    <property type="entry name" value="F1F0 ATP synthase subunit B, membrane domain"/>
    <property type="match status" value="1"/>
</dbReference>
<dbReference type="HAMAP" id="MF_01398">
    <property type="entry name" value="ATP_synth_b_bprime"/>
    <property type="match status" value="1"/>
</dbReference>
<dbReference type="InterPro" id="IPR028987">
    <property type="entry name" value="ATP_synth_B-like_membr_sf"/>
</dbReference>
<dbReference type="InterPro" id="IPR002146">
    <property type="entry name" value="ATP_synth_b/b'su_bac/chlpt"/>
</dbReference>
<dbReference type="InterPro" id="IPR005864">
    <property type="entry name" value="ATP_synth_F0_bsu_bac"/>
</dbReference>
<dbReference type="InterPro" id="IPR050059">
    <property type="entry name" value="ATP_synthase_B_chain"/>
</dbReference>
<dbReference type="NCBIfam" id="TIGR01144">
    <property type="entry name" value="ATP_synt_b"/>
    <property type="match status" value="1"/>
</dbReference>
<dbReference type="PANTHER" id="PTHR33445:SF1">
    <property type="entry name" value="ATP SYNTHASE SUBUNIT B"/>
    <property type="match status" value="1"/>
</dbReference>
<dbReference type="PANTHER" id="PTHR33445">
    <property type="entry name" value="ATP SYNTHASE SUBUNIT B', CHLOROPLASTIC"/>
    <property type="match status" value="1"/>
</dbReference>
<dbReference type="Pfam" id="PF00430">
    <property type="entry name" value="ATP-synt_B"/>
    <property type="match status" value="1"/>
</dbReference>
<dbReference type="SUPFAM" id="SSF81573">
    <property type="entry name" value="F1F0 ATP synthase subunit B, membrane domain"/>
    <property type="match status" value="1"/>
</dbReference>
<name>ATPF_PROMO</name>
<gene>
    <name type="primary">atpF</name>
    <name type="synonym">uncF</name>
</gene>
<protein>
    <recommendedName>
        <fullName>ATP synthase subunit b, sodium ion specific</fullName>
    </recommendedName>
    <alternativeName>
        <fullName>ATP synthase F(0) sector subunit b</fullName>
    </alternativeName>
    <alternativeName>
        <fullName>ATPase subunit I</fullName>
    </alternativeName>
    <alternativeName>
        <fullName>F-type ATPase subunit b</fullName>
        <shortName>F-ATPase subunit b</shortName>
    </alternativeName>
</protein>
<comment type="function">
    <text evidence="1">F(1)F(0) ATP synthase produces ATP from ADP in the presence of a proton or sodium gradient. F-type ATPases consist of two structural domains, F(1) containing the extramembraneous catalytic core and F(0) containing the membrane proton channel, linked together by a central stalk and a peripheral stalk. During catalysis, ATP synthesis in the catalytic domain of F(1) is coupled via a rotary mechanism of the central stalk subunits to proton translocation (By similarity).</text>
</comment>
<comment type="function">
    <text evidence="1">Component of the F(0) channel, it forms part of the peripheral stalk, linking F(1) to F(0).</text>
</comment>
<comment type="subunit">
    <text evidence="1">F-type ATPases have 2 components, F(1) - the catalytic core - and F(0) - the membrane proton channel. F(1) has five subunits: alpha(3), beta(3), gamma(1), delta(1), epsilon(1). F(0) has three main subunits: a(1), b(2) and c(10-14). The alpha and beta chains form an alternating ring which encloses part of the gamma chain. F(1) is attached to F(0) by a central stalk formed by the gamma and epsilon chains, while a peripheral stalk is formed by the delta and b chains (By similarity).</text>
</comment>
<comment type="subcellular location">
    <subcellularLocation>
        <location evidence="3">Cell inner membrane</location>
        <topology evidence="3">Single-pass membrane protein</topology>
    </subcellularLocation>
</comment>
<comment type="miscellaneous">
    <text>The ATPase of P.modestum is of special interest because it uses sodium ions instead of protons as the physiological coupling ion.</text>
</comment>
<comment type="similarity">
    <text evidence="3">Belongs to the ATPase B chain family.</text>
</comment>
<comment type="sequence caution" evidence="3">
    <conflict type="erroneous initiation">
        <sequence resource="EMBL-CDS" id="CAA38580"/>
    </conflict>
</comment>
<comment type="sequence caution" evidence="3">
    <conflict type="erroneous initiation">
        <sequence resource="EMBL-CDS" id="CAA41370"/>
    </conflict>
</comment>
<comment type="sequence caution" evidence="3">
    <conflict type="erroneous initiation">
        <sequence resource="EMBL-CDS" id="CAA46896"/>
    </conflict>
</comment>